<gene>
    <name evidence="1" type="primary">ureA</name>
    <name type="ordered locus">CKO_04455</name>
</gene>
<evidence type="ECO:0000255" key="1">
    <source>
        <dbReference type="HAMAP-Rule" id="MF_00739"/>
    </source>
</evidence>
<reference key="1">
    <citation type="submission" date="2007-08" db="EMBL/GenBank/DDBJ databases">
        <authorList>
            <consortium name="The Citrobacter koseri Genome Sequencing Project"/>
            <person name="McClelland M."/>
            <person name="Sanderson E.K."/>
            <person name="Porwollik S."/>
            <person name="Spieth J."/>
            <person name="Clifton W.S."/>
            <person name="Latreille P."/>
            <person name="Courtney L."/>
            <person name="Wang C."/>
            <person name="Pepin K."/>
            <person name="Bhonagiri V."/>
            <person name="Nash W."/>
            <person name="Johnson M."/>
            <person name="Thiruvilangam P."/>
            <person name="Wilson R."/>
        </authorList>
    </citation>
    <scope>NUCLEOTIDE SEQUENCE [LARGE SCALE GENOMIC DNA]</scope>
    <source>
        <strain>ATCC BAA-895 / CDC 4225-83 / SGSC4696</strain>
    </source>
</reference>
<protein>
    <recommendedName>
        <fullName evidence="1">Urease subunit gamma</fullName>
        <ecNumber evidence="1">3.5.1.5</ecNumber>
    </recommendedName>
    <alternativeName>
        <fullName evidence="1">Urea amidohydrolase subunit gamma</fullName>
    </alternativeName>
</protein>
<feature type="chain" id="PRO_1000046323" description="Urease subunit gamma">
    <location>
        <begin position="1"/>
        <end position="100"/>
    </location>
</feature>
<name>URE3_CITK8</name>
<organism>
    <name type="scientific">Citrobacter koseri (strain ATCC BAA-895 / CDC 4225-83 / SGSC4696)</name>
    <dbReference type="NCBI Taxonomy" id="290338"/>
    <lineage>
        <taxon>Bacteria</taxon>
        <taxon>Pseudomonadati</taxon>
        <taxon>Pseudomonadota</taxon>
        <taxon>Gammaproteobacteria</taxon>
        <taxon>Enterobacterales</taxon>
        <taxon>Enterobacteriaceae</taxon>
        <taxon>Citrobacter</taxon>
    </lineage>
</organism>
<sequence length="100" mass="11073">MELTPREKDKLLLFTAALVAERRLARGLKLNYPESVALISAFIMEGARDGKSVASLMEDGRHVLTRDRVMEGVPEMIPDIQVEATFPDGSKLVTVHNPIV</sequence>
<proteinExistence type="inferred from homology"/>
<comment type="catalytic activity">
    <reaction evidence="1">
        <text>urea + 2 H2O + H(+) = hydrogencarbonate + 2 NH4(+)</text>
        <dbReference type="Rhea" id="RHEA:20557"/>
        <dbReference type="ChEBI" id="CHEBI:15377"/>
        <dbReference type="ChEBI" id="CHEBI:15378"/>
        <dbReference type="ChEBI" id="CHEBI:16199"/>
        <dbReference type="ChEBI" id="CHEBI:17544"/>
        <dbReference type="ChEBI" id="CHEBI:28938"/>
        <dbReference type="EC" id="3.5.1.5"/>
    </reaction>
</comment>
<comment type="pathway">
    <text evidence="1">Nitrogen metabolism; urea degradation; CO(2) and NH(3) from urea (urease route): step 1/1.</text>
</comment>
<comment type="subunit">
    <text evidence="1">Heterotrimer of UreA (gamma), UreB (beta) and UreC (alpha) subunits. Three heterotrimers associate to form the active enzyme.</text>
</comment>
<comment type="subcellular location">
    <subcellularLocation>
        <location evidence="1">Cytoplasm</location>
    </subcellularLocation>
</comment>
<comment type="similarity">
    <text evidence="1">Belongs to the urease gamma subunit family.</text>
</comment>
<keyword id="KW-0963">Cytoplasm</keyword>
<keyword id="KW-0378">Hydrolase</keyword>
<keyword id="KW-1185">Reference proteome</keyword>
<accession>A8APU8</accession>
<dbReference type="EC" id="3.5.1.5" evidence="1"/>
<dbReference type="EMBL" id="CP000822">
    <property type="protein sequence ID" value="ABV15511.1"/>
    <property type="molecule type" value="Genomic_DNA"/>
</dbReference>
<dbReference type="RefSeq" id="WP_012135194.1">
    <property type="nucleotide sequence ID" value="NC_009792.1"/>
</dbReference>
<dbReference type="SMR" id="A8APU8"/>
<dbReference type="STRING" id="290338.CKO_04455"/>
<dbReference type="GeneID" id="45138024"/>
<dbReference type="KEGG" id="cko:CKO_04455"/>
<dbReference type="HOGENOM" id="CLU_145825_1_0_6"/>
<dbReference type="OrthoDB" id="9797217at2"/>
<dbReference type="UniPathway" id="UPA00258">
    <property type="reaction ID" value="UER00370"/>
</dbReference>
<dbReference type="Proteomes" id="UP000008148">
    <property type="component" value="Chromosome"/>
</dbReference>
<dbReference type="GO" id="GO:0005737">
    <property type="term" value="C:cytoplasm"/>
    <property type="evidence" value="ECO:0007669"/>
    <property type="project" value="UniProtKB-SubCell"/>
</dbReference>
<dbReference type="GO" id="GO:0016151">
    <property type="term" value="F:nickel cation binding"/>
    <property type="evidence" value="ECO:0007669"/>
    <property type="project" value="InterPro"/>
</dbReference>
<dbReference type="GO" id="GO:0009039">
    <property type="term" value="F:urease activity"/>
    <property type="evidence" value="ECO:0007669"/>
    <property type="project" value="UniProtKB-UniRule"/>
</dbReference>
<dbReference type="GO" id="GO:0043419">
    <property type="term" value="P:urea catabolic process"/>
    <property type="evidence" value="ECO:0007669"/>
    <property type="project" value="UniProtKB-UniRule"/>
</dbReference>
<dbReference type="CDD" id="cd00390">
    <property type="entry name" value="Urease_gamma"/>
    <property type="match status" value="1"/>
</dbReference>
<dbReference type="Gene3D" id="3.30.280.10">
    <property type="entry name" value="Urease, gamma-like subunit"/>
    <property type="match status" value="1"/>
</dbReference>
<dbReference type="HAMAP" id="MF_00739">
    <property type="entry name" value="Urease_gamma"/>
    <property type="match status" value="1"/>
</dbReference>
<dbReference type="InterPro" id="IPR012010">
    <property type="entry name" value="Urease_gamma"/>
</dbReference>
<dbReference type="InterPro" id="IPR002026">
    <property type="entry name" value="Urease_gamma/gamma-beta_su"/>
</dbReference>
<dbReference type="InterPro" id="IPR036463">
    <property type="entry name" value="Urease_gamma_sf"/>
</dbReference>
<dbReference type="InterPro" id="IPR050069">
    <property type="entry name" value="Urease_subunit"/>
</dbReference>
<dbReference type="NCBIfam" id="NF009712">
    <property type="entry name" value="PRK13241.1"/>
    <property type="match status" value="1"/>
</dbReference>
<dbReference type="NCBIfam" id="TIGR00193">
    <property type="entry name" value="urease_gam"/>
    <property type="match status" value="1"/>
</dbReference>
<dbReference type="PANTHER" id="PTHR33569">
    <property type="entry name" value="UREASE"/>
    <property type="match status" value="1"/>
</dbReference>
<dbReference type="PANTHER" id="PTHR33569:SF1">
    <property type="entry name" value="UREASE"/>
    <property type="match status" value="1"/>
</dbReference>
<dbReference type="Pfam" id="PF00547">
    <property type="entry name" value="Urease_gamma"/>
    <property type="match status" value="1"/>
</dbReference>
<dbReference type="PIRSF" id="PIRSF001223">
    <property type="entry name" value="Urease_gamma"/>
    <property type="match status" value="1"/>
</dbReference>
<dbReference type="SUPFAM" id="SSF54111">
    <property type="entry name" value="Urease, gamma-subunit"/>
    <property type="match status" value="1"/>
</dbReference>